<organism>
    <name type="scientific">Methylibium petroleiphilum (strain ATCC BAA-1232 / LMG 22953 / PM1)</name>
    <dbReference type="NCBI Taxonomy" id="420662"/>
    <lineage>
        <taxon>Bacteria</taxon>
        <taxon>Pseudomonadati</taxon>
        <taxon>Pseudomonadota</taxon>
        <taxon>Betaproteobacteria</taxon>
        <taxon>Burkholderiales</taxon>
        <taxon>Sphaerotilaceae</taxon>
        <taxon>Methylibium</taxon>
    </lineage>
</organism>
<keyword id="KW-0066">ATP synthesis</keyword>
<keyword id="KW-0997">Cell inner membrane</keyword>
<keyword id="KW-1003">Cell membrane</keyword>
<keyword id="KW-0139">CF(1)</keyword>
<keyword id="KW-0375">Hydrogen ion transport</keyword>
<keyword id="KW-0406">Ion transport</keyword>
<keyword id="KW-0472">Membrane</keyword>
<keyword id="KW-1185">Reference proteome</keyword>
<keyword id="KW-0813">Transport</keyword>
<feature type="chain" id="PRO_1000056503" description="ATP synthase epsilon chain">
    <location>
        <begin position="1"/>
        <end position="138"/>
    </location>
</feature>
<name>ATPE_METPP</name>
<evidence type="ECO:0000255" key="1">
    <source>
        <dbReference type="HAMAP-Rule" id="MF_00530"/>
    </source>
</evidence>
<gene>
    <name evidence="1" type="primary">atpC</name>
    <name type="ordered locus">Mpe_A0198</name>
</gene>
<protein>
    <recommendedName>
        <fullName evidence="1">ATP synthase epsilon chain</fullName>
    </recommendedName>
    <alternativeName>
        <fullName evidence="1">ATP synthase F1 sector epsilon subunit</fullName>
    </alternativeName>
    <alternativeName>
        <fullName evidence="1">F-ATPase epsilon subunit</fullName>
    </alternativeName>
</protein>
<proteinExistence type="inferred from homology"/>
<comment type="function">
    <text evidence="1">Produces ATP from ADP in the presence of a proton gradient across the membrane.</text>
</comment>
<comment type="subunit">
    <text evidence="1">F-type ATPases have 2 components, CF(1) - the catalytic core - and CF(0) - the membrane proton channel. CF(1) has five subunits: alpha(3), beta(3), gamma(1), delta(1), epsilon(1). CF(0) has three main subunits: a, b and c.</text>
</comment>
<comment type="subcellular location">
    <subcellularLocation>
        <location evidence="1">Cell inner membrane</location>
        <topology evidence="1">Peripheral membrane protein</topology>
    </subcellularLocation>
</comment>
<comment type="similarity">
    <text evidence="1">Belongs to the ATPase epsilon chain family.</text>
</comment>
<accession>A2SC71</accession>
<dbReference type="EMBL" id="CP000555">
    <property type="protein sequence ID" value="ABM93160.1"/>
    <property type="molecule type" value="Genomic_DNA"/>
</dbReference>
<dbReference type="RefSeq" id="WP_011827799.1">
    <property type="nucleotide sequence ID" value="NC_008825.1"/>
</dbReference>
<dbReference type="SMR" id="A2SC71"/>
<dbReference type="STRING" id="420662.Mpe_A0198"/>
<dbReference type="KEGG" id="mpt:Mpe_A0198"/>
<dbReference type="eggNOG" id="COG0355">
    <property type="taxonomic scope" value="Bacteria"/>
</dbReference>
<dbReference type="HOGENOM" id="CLU_084338_2_0_4"/>
<dbReference type="Proteomes" id="UP000000366">
    <property type="component" value="Chromosome"/>
</dbReference>
<dbReference type="GO" id="GO:0005886">
    <property type="term" value="C:plasma membrane"/>
    <property type="evidence" value="ECO:0007669"/>
    <property type="project" value="UniProtKB-SubCell"/>
</dbReference>
<dbReference type="GO" id="GO:0045259">
    <property type="term" value="C:proton-transporting ATP synthase complex"/>
    <property type="evidence" value="ECO:0007669"/>
    <property type="project" value="UniProtKB-KW"/>
</dbReference>
<dbReference type="GO" id="GO:0005524">
    <property type="term" value="F:ATP binding"/>
    <property type="evidence" value="ECO:0007669"/>
    <property type="project" value="UniProtKB-UniRule"/>
</dbReference>
<dbReference type="GO" id="GO:0046933">
    <property type="term" value="F:proton-transporting ATP synthase activity, rotational mechanism"/>
    <property type="evidence" value="ECO:0007669"/>
    <property type="project" value="UniProtKB-UniRule"/>
</dbReference>
<dbReference type="CDD" id="cd12152">
    <property type="entry name" value="F1-ATPase_delta"/>
    <property type="match status" value="1"/>
</dbReference>
<dbReference type="FunFam" id="2.60.15.10:FF:000001">
    <property type="entry name" value="ATP synthase epsilon chain"/>
    <property type="match status" value="1"/>
</dbReference>
<dbReference type="Gene3D" id="1.20.5.440">
    <property type="entry name" value="ATP synthase delta/epsilon subunit, C-terminal domain"/>
    <property type="match status" value="1"/>
</dbReference>
<dbReference type="Gene3D" id="2.60.15.10">
    <property type="entry name" value="F0F1 ATP synthase delta/epsilon subunit, N-terminal"/>
    <property type="match status" value="1"/>
</dbReference>
<dbReference type="HAMAP" id="MF_00530">
    <property type="entry name" value="ATP_synth_epsil_bac"/>
    <property type="match status" value="1"/>
</dbReference>
<dbReference type="InterPro" id="IPR036794">
    <property type="entry name" value="ATP_F1_dsu/esu_C_sf"/>
</dbReference>
<dbReference type="InterPro" id="IPR001469">
    <property type="entry name" value="ATP_synth_F1_dsu/esu"/>
</dbReference>
<dbReference type="InterPro" id="IPR020546">
    <property type="entry name" value="ATP_synth_F1_dsu/esu_N"/>
</dbReference>
<dbReference type="InterPro" id="IPR020547">
    <property type="entry name" value="ATP_synth_F1_esu_C"/>
</dbReference>
<dbReference type="InterPro" id="IPR036771">
    <property type="entry name" value="ATPsynth_dsu/esu_N"/>
</dbReference>
<dbReference type="NCBIfam" id="TIGR01216">
    <property type="entry name" value="ATP_synt_epsi"/>
    <property type="match status" value="1"/>
</dbReference>
<dbReference type="NCBIfam" id="NF001847">
    <property type="entry name" value="PRK00571.1-4"/>
    <property type="match status" value="1"/>
</dbReference>
<dbReference type="PANTHER" id="PTHR13822">
    <property type="entry name" value="ATP SYNTHASE DELTA/EPSILON CHAIN"/>
    <property type="match status" value="1"/>
</dbReference>
<dbReference type="PANTHER" id="PTHR13822:SF10">
    <property type="entry name" value="ATP SYNTHASE EPSILON CHAIN, CHLOROPLASTIC"/>
    <property type="match status" value="1"/>
</dbReference>
<dbReference type="Pfam" id="PF00401">
    <property type="entry name" value="ATP-synt_DE"/>
    <property type="match status" value="1"/>
</dbReference>
<dbReference type="Pfam" id="PF02823">
    <property type="entry name" value="ATP-synt_DE_N"/>
    <property type="match status" value="1"/>
</dbReference>
<dbReference type="SUPFAM" id="SSF46604">
    <property type="entry name" value="Epsilon subunit of F1F0-ATP synthase C-terminal domain"/>
    <property type="match status" value="1"/>
</dbReference>
<dbReference type="SUPFAM" id="SSF51344">
    <property type="entry name" value="Epsilon subunit of F1F0-ATP synthase N-terminal domain"/>
    <property type="match status" value="1"/>
</dbReference>
<sequence>MATIHVDVVSAEASIFSGEAKFVALPGEMGELGIYPRHTPLITRIKPGAVRVERADNGEEEFVFVAGGILEVQPDRVTVLADTAIRGHDLDEAKAEEAKKAAEEAMKNAKSDIDFAKAQGEFAAMAAQIAALRKFRKK</sequence>
<reference key="1">
    <citation type="journal article" date="2007" name="J. Bacteriol.">
        <title>Whole-genome analysis of the methyl tert-butyl ether-degrading beta-proteobacterium Methylibium petroleiphilum PM1.</title>
        <authorList>
            <person name="Kane S.R."/>
            <person name="Chakicherla A.Y."/>
            <person name="Chain P.S.G."/>
            <person name="Schmidt R."/>
            <person name="Shin M.W."/>
            <person name="Legler T.C."/>
            <person name="Scow K.M."/>
            <person name="Larimer F.W."/>
            <person name="Lucas S.M."/>
            <person name="Richardson P.M."/>
            <person name="Hristova K.R."/>
        </authorList>
    </citation>
    <scope>NUCLEOTIDE SEQUENCE [LARGE SCALE GENOMIC DNA]</scope>
    <source>
        <strain>ATCC BAA-1232 / LMG 22953 / PM1</strain>
    </source>
</reference>